<evidence type="ECO:0000255" key="1">
    <source>
        <dbReference type="HAMAP-Rule" id="MF_00294"/>
    </source>
</evidence>
<gene>
    <name evidence="1" type="primary">rpmG1</name>
    <name type="ordered locus">Mvan_1229</name>
</gene>
<reference key="1">
    <citation type="submission" date="2006-12" db="EMBL/GenBank/DDBJ databases">
        <title>Complete sequence of Mycobacterium vanbaalenii PYR-1.</title>
        <authorList>
            <consortium name="US DOE Joint Genome Institute"/>
            <person name="Copeland A."/>
            <person name="Lucas S."/>
            <person name="Lapidus A."/>
            <person name="Barry K."/>
            <person name="Detter J.C."/>
            <person name="Glavina del Rio T."/>
            <person name="Hammon N."/>
            <person name="Israni S."/>
            <person name="Dalin E."/>
            <person name="Tice H."/>
            <person name="Pitluck S."/>
            <person name="Singan V."/>
            <person name="Schmutz J."/>
            <person name="Larimer F."/>
            <person name="Land M."/>
            <person name="Hauser L."/>
            <person name="Kyrpides N."/>
            <person name="Anderson I.J."/>
            <person name="Miller C."/>
            <person name="Richardson P."/>
        </authorList>
    </citation>
    <scope>NUCLEOTIDE SEQUENCE [LARGE SCALE GENOMIC DNA]</scope>
    <source>
        <strain>DSM 7251 / JCM 13017 / BCRC 16820 / KCTC 9966 / NRRL B-24157 / PYR-1</strain>
    </source>
</reference>
<sequence>MASSTDVRPKITLACEVCKHRNYITKKNRRNDPDRLEIKKFCPNCGKHQAHKESR</sequence>
<organism>
    <name type="scientific">Mycolicibacterium vanbaalenii (strain DSM 7251 / JCM 13017 / BCRC 16820 / KCTC 9966 / NRRL B-24157 / PYR-1)</name>
    <name type="common">Mycobacterium vanbaalenii</name>
    <dbReference type="NCBI Taxonomy" id="350058"/>
    <lineage>
        <taxon>Bacteria</taxon>
        <taxon>Bacillati</taxon>
        <taxon>Actinomycetota</taxon>
        <taxon>Actinomycetes</taxon>
        <taxon>Mycobacteriales</taxon>
        <taxon>Mycobacteriaceae</taxon>
        <taxon>Mycolicibacterium</taxon>
    </lineage>
</organism>
<accession>A1T4G4</accession>
<protein>
    <recommendedName>
        <fullName evidence="1">Large ribosomal subunit protein bL33A</fullName>
    </recommendedName>
    <alternativeName>
        <fullName evidence="1">50S ribosomal protein L33 1</fullName>
    </alternativeName>
</protein>
<comment type="similarity">
    <text evidence="1">Belongs to the bacterial ribosomal protein bL33 family.</text>
</comment>
<proteinExistence type="inferred from homology"/>
<feature type="chain" id="PRO_0000356568" description="Large ribosomal subunit protein bL33A">
    <location>
        <begin position="1"/>
        <end position="55"/>
    </location>
</feature>
<dbReference type="EMBL" id="CP000511">
    <property type="protein sequence ID" value="ABM12064.1"/>
    <property type="molecule type" value="Genomic_DNA"/>
</dbReference>
<dbReference type="SMR" id="A1T4G4"/>
<dbReference type="STRING" id="350058.Mvan_1229"/>
<dbReference type="KEGG" id="mva:Mvan_1229"/>
<dbReference type="eggNOG" id="COG0267">
    <property type="taxonomic scope" value="Bacteria"/>
</dbReference>
<dbReference type="HOGENOM" id="CLU_190949_0_2_11"/>
<dbReference type="Proteomes" id="UP000009159">
    <property type="component" value="Chromosome"/>
</dbReference>
<dbReference type="GO" id="GO:0005737">
    <property type="term" value="C:cytoplasm"/>
    <property type="evidence" value="ECO:0007669"/>
    <property type="project" value="UniProtKB-ARBA"/>
</dbReference>
<dbReference type="GO" id="GO:1990904">
    <property type="term" value="C:ribonucleoprotein complex"/>
    <property type="evidence" value="ECO:0007669"/>
    <property type="project" value="UniProtKB-KW"/>
</dbReference>
<dbReference type="GO" id="GO:0005840">
    <property type="term" value="C:ribosome"/>
    <property type="evidence" value="ECO:0007669"/>
    <property type="project" value="UniProtKB-KW"/>
</dbReference>
<dbReference type="GO" id="GO:0003735">
    <property type="term" value="F:structural constituent of ribosome"/>
    <property type="evidence" value="ECO:0007669"/>
    <property type="project" value="InterPro"/>
</dbReference>
<dbReference type="GO" id="GO:0006412">
    <property type="term" value="P:translation"/>
    <property type="evidence" value="ECO:0007669"/>
    <property type="project" value="UniProtKB-UniRule"/>
</dbReference>
<dbReference type="Gene3D" id="2.20.28.120">
    <property type="entry name" value="Ribosomal protein L33"/>
    <property type="match status" value="1"/>
</dbReference>
<dbReference type="HAMAP" id="MF_00294">
    <property type="entry name" value="Ribosomal_bL33"/>
    <property type="match status" value="1"/>
</dbReference>
<dbReference type="InterPro" id="IPR001705">
    <property type="entry name" value="Ribosomal_bL33"/>
</dbReference>
<dbReference type="InterPro" id="IPR018264">
    <property type="entry name" value="Ribosomal_bL33_CS"/>
</dbReference>
<dbReference type="InterPro" id="IPR038584">
    <property type="entry name" value="Ribosomal_bL33_sf"/>
</dbReference>
<dbReference type="InterPro" id="IPR011332">
    <property type="entry name" value="Ribosomal_zn-bd"/>
</dbReference>
<dbReference type="NCBIfam" id="NF001764">
    <property type="entry name" value="PRK00504.1"/>
    <property type="match status" value="1"/>
</dbReference>
<dbReference type="NCBIfam" id="NF001860">
    <property type="entry name" value="PRK00595.1"/>
    <property type="match status" value="1"/>
</dbReference>
<dbReference type="NCBIfam" id="TIGR01023">
    <property type="entry name" value="rpmG_bact"/>
    <property type="match status" value="1"/>
</dbReference>
<dbReference type="PANTHER" id="PTHR43168">
    <property type="entry name" value="50S RIBOSOMAL PROTEIN L33, CHLOROPLASTIC"/>
    <property type="match status" value="1"/>
</dbReference>
<dbReference type="PANTHER" id="PTHR43168:SF2">
    <property type="entry name" value="LARGE RIBOSOMAL SUBUNIT PROTEIN BL33C"/>
    <property type="match status" value="1"/>
</dbReference>
<dbReference type="Pfam" id="PF00471">
    <property type="entry name" value="Ribosomal_L33"/>
    <property type="match status" value="1"/>
</dbReference>
<dbReference type="SUPFAM" id="SSF57829">
    <property type="entry name" value="Zn-binding ribosomal proteins"/>
    <property type="match status" value="1"/>
</dbReference>
<dbReference type="PROSITE" id="PS00582">
    <property type="entry name" value="RIBOSOMAL_L33"/>
    <property type="match status" value="1"/>
</dbReference>
<name>RL331_MYCVP</name>
<keyword id="KW-0687">Ribonucleoprotein</keyword>
<keyword id="KW-0689">Ribosomal protein</keyword>